<name>RS4_CARRP</name>
<proteinExistence type="inferred from homology"/>
<sequence length="197" mass="23896">MTKKKSKNIKFCRREGENLEFFSEKKYLEKSRSNLTPGENGTEKGKVSDFGLILRTKQKIKRYYCIFEKEFKKIYFIIKKNFFNNIDLINFLERRLDNVIYRFNFSISRKESRQLIIHGNVFVNYFKNKIPSYLLSPGDVITINKKFLLKKYLYDYKNILFVNWLYNKYFDGYGIFLSFSNKNLFNLNKNLILDIYK</sequence>
<comment type="function">
    <text evidence="1">One of the primary rRNA binding proteins, it binds directly to 16S rRNA where it nucleates assembly of the body of the 30S subunit.</text>
</comment>
<comment type="function">
    <text evidence="1">With S5 and S12 plays an important role in translational accuracy.</text>
</comment>
<comment type="subunit">
    <text evidence="1">Part of the 30S ribosomal subunit. Contacts protein S5. The interaction surface between S4 and S5 is involved in control of translational fidelity (By similarity).</text>
</comment>
<comment type="similarity">
    <text evidence="3">Belongs to the universal ribosomal protein uS4 family.</text>
</comment>
<accession>Q05FK4</accession>
<keyword id="KW-0687">Ribonucleoprotein</keyword>
<keyword id="KW-0689">Ribosomal protein</keyword>
<keyword id="KW-0694">RNA-binding</keyword>
<keyword id="KW-0699">rRNA-binding</keyword>
<feature type="chain" id="PRO_0000293256" description="Small ribosomal subunit protein uS4">
    <location>
        <begin position="1"/>
        <end position="197"/>
    </location>
</feature>
<feature type="domain" description="S4 RNA-binding" evidence="2">
    <location>
        <begin position="94"/>
        <end position="158"/>
    </location>
</feature>
<organism>
    <name type="scientific">Carsonella ruddii (strain PV)</name>
    <dbReference type="NCBI Taxonomy" id="387662"/>
    <lineage>
        <taxon>Bacteria</taxon>
        <taxon>Pseudomonadati</taxon>
        <taxon>Pseudomonadota</taxon>
        <taxon>Gammaproteobacteria</taxon>
        <taxon>Oceanospirillales</taxon>
        <taxon>Halomonadaceae</taxon>
        <taxon>Zymobacter group</taxon>
        <taxon>Candidatus Carsonella</taxon>
    </lineage>
</organism>
<protein>
    <recommendedName>
        <fullName evidence="3">Small ribosomal subunit protein uS4</fullName>
    </recommendedName>
    <alternativeName>
        <fullName>30S ribosomal protein S4</fullName>
    </alternativeName>
</protein>
<evidence type="ECO:0000250" key="1"/>
<evidence type="ECO:0000255" key="2">
    <source>
        <dbReference type="PROSITE-ProRule" id="PRU00182"/>
    </source>
</evidence>
<evidence type="ECO:0000305" key="3"/>
<reference key="1">
    <citation type="journal article" date="2006" name="Science">
        <title>The 160-kilobase genome of the bacterial endosymbiont Carsonella.</title>
        <authorList>
            <person name="Nakabachi A."/>
            <person name="Yamashita A."/>
            <person name="Toh H."/>
            <person name="Ishikawa H."/>
            <person name="Dunbar H.E."/>
            <person name="Moran N.A."/>
            <person name="Hattori M."/>
        </authorList>
    </citation>
    <scope>NUCLEOTIDE SEQUENCE [LARGE SCALE GENOMIC DNA]</scope>
    <source>
        <strain>PV</strain>
    </source>
</reference>
<dbReference type="EMBL" id="AP009180">
    <property type="protein sequence ID" value="BAF35167.1"/>
    <property type="molecule type" value="Genomic_DNA"/>
</dbReference>
<dbReference type="RefSeq" id="WP_011672359.1">
    <property type="nucleotide sequence ID" value="NC_008512.1"/>
</dbReference>
<dbReference type="SMR" id="Q05FK4"/>
<dbReference type="STRING" id="387662.CRP_136"/>
<dbReference type="KEGG" id="crp:CRP_136"/>
<dbReference type="HOGENOM" id="CLU_092403_0_1_6"/>
<dbReference type="OrthoDB" id="9803672at2"/>
<dbReference type="Proteomes" id="UP000000777">
    <property type="component" value="Chromosome"/>
</dbReference>
<dbReference type="GO" id="GO:0015935">
    <property type="term" value="C:small ribosomal subunit"/>
    <property type="evidence" value="ECO:0007669"/>
    <property type="project" value="TreeGrafter"/>
</dbReference>
<dbReference type="GO" id="GO:0019843">
    <property type="term" value="F:rRNA binding"/>
    <property type="evidence" value="ECO:0007669"/>
    <property type="project" value="UniProtKB-KW"/>
</dbReference>
<dbReference type="GO" id="GO:0003735">
    <property type="term" value="F:structural constituent of ribosome"/>
    <property type="evidence" value="ECO:0007669"/>
    <property type="project" value="TreeGrafter"/>
</dbReference>
<dbReference type="GO" id="GO:0042274">
    <property type="term" value="P:ribosomal small subunit biogenesis"/>
    <property type="evidence" value="ECO:0007669"/>
    <property type="project" value="TreeGrafter"/>
</dbReference>
<dbReference type="CDD" id="cd00165">
    <property type="entry name" value="S4"/>
    <property type="match status" value="1"/>
</dbReference>
<dbReference type="Gene3D" id="1.10.1050.10">
    <property type="entry name" value="Ribosomal Protein S4 Delta 41, Chain A, domain 1"/>
    <property type="match status" value="1"/>
</dbReference>
<dbReference type="Gene3D" id="3.10.290.10">
    <property type="entry name" value="RNA-binding S4 domain"/>
    <property type="match status" value="1"/>
</dbReference>
<dbReference type="InterPro" id="IPR022801">
    <property type="entry name" value="Ribosomal_uS4"/>
</dbReference>
<dbReference type="InterPro" id="IPR018079">
    <property type="entry name" value="Ribosomal_uS4_CS"/>
</dbReference>
<dbReference type="InterPro" id="IPR001912">
    <property type="entry name" value="Ribosomal_uS4_N"/>
</dbReference>
<dbReference type="InterPro" id="IPR002942">
    <property type="entry name" value="S4_RNA-bd"/>
</dbReference>
<dbReference type="InterPro" id="IPR036986">
    <property type="entry name" value="S4_RNA-bd_sf"/>
</dbReference>
<dbReference type="NCBIfam" id="NF003717">
    <property type="entry name" value="PRK05327.1"/>
    <property type="match status" value="1"/>
</dbReference>
<dbReference type="PANTHER" id="PTHR11831">
    <property type="entry name" value="30S 40S RIBOSOMAL PROTEIN"/>
    <property type="match status" value="1"/>
</dbReference>
<dbReference type="PANTHER" id="PTHR11831:SF4">
    <property type="entry name" value="SMALL RIBOSOMAL SUBUNIT PROTEIN US4M"/>
    <property type="match status" value="1"/>
</dbReference>
<dbReference type="Pfam" id="PF00163">
    <property type="entry name" value="Ribosomal_S4"/>
    <property type="match status" value="1"/>
</dbReference>
<dbReference type="Pfam" id="PF01479">
    <property type="entry name" value="S4"/>
    <property type="match status" value="1"/>
</dbReference>
<dbReference type="SMART" id="SM01390">
    <property type="entry name" value="Ribosomal_S4"/>
    <property type="match status" value="1"/>
</dbReference>
<dbReference type="SMART" id="SM00363">
    <property type="entry name" value="S4"/>
    <property type="match status" value="1"/>
</dbReference>
<dbReference type="SUPFAM" id="SSF55174">
    <property type="entry name" value="Alpha-L RNA-binding motif"/>
    <property type="match status" value="1"/>
</dbReference>
<dbReference type="PROSITE" id="PS00632">
    <property type="entry name" value="RIBOSOMAL_S4"/>
    <property type="match status" value="1"/>
</dbReference>
<dbReference type="PROSITE" id="PS50889">
    <property type="entry name" value="S4"/>
    <property type="match status" value="1"/>
</dbReference>
<gene>
    <name type="primary">rpsD</name>
    <name type="ordered locus">CRP_136</name>
</gene>